<protein>
    <recommendedName>
        <fullName>Heat shock protein 70 2</fullName>
    </recommendedName>
</protein>
<keyword id="KW-0007">Acetylation</keyword>
<keyword id="KW-0067">ATP-binding</keyword>
<keyword id="KW-0143">Chaperone</keyword>
<keyword id="KW-0963">Cytoplasm</keyword>
<keyword id="KW-0547">Nucleotide-binding</keyword>
<keyword id="KW-0346">Stress response</keyword>
<proteinExistence type="inferred from homology"/>
<dbReference type="EMBL" id="U49932">
    <property type="protein sequence ID" value="AAB63968.1"/>
    <property type="molecule type" value="Genomic_DNA"/>
</dbReference>
<dbReference type="SMR" id="P53623"/>
<dbReference type="GO" id="GO:0005737">
    <property type="term" value="C:cytoplasm"/>
    <property type="evidence" value="ECO:0007669"/>
    <property type="project" value="UniProtKB-SubCell"/>
</dbReference>
<dbReference type="GO" id="GO:0005524">
    <property type="term" value="F:ATP binding"/>
    <property type="evidence" value="ECO:0007669"/>
    <property type="project" value="UniProtKB-KW"/>
</dbReference>
<dbReference type="GO" id="GO:0140662">
    <property type="term" value="F:ATP-dependent protein folding chaperone"/>
    <property type="evidence" value="ECO:0007669"/>
    <property type="project" value="InterPro"/>
</dbReference>
<dbReference type="CDD" id="cd10233">
    <property type="entry name" value="ASKHA_NBD_HSP70_HSPA1"/>
    <property type="match status" value="1"/>
</dbReference>
<dbReference type="FunFam" id="2.60.34.10:FF:000002">
    <property type="entry name" value="Heat shock 70 kDa"/>
    <property type="match status" value="1"/>
</dbReference>
<dbReference type="FunFam" id="3.30.420.40:FF:000172">
    <property type="entry name" value="Heat shock 70 kDa protein"/>
    <property type="match status" value="1"/>
</dbReference>
<dbReference type="FunFam" id="3.30.30.30:FF:000001">
    <property type="entry name" value="heat shock 70 kDa protein-like"/>
    <property type="match status" value="1"/>
</dbReference>
<dbReference type="FunFam" id="3.30.420.40:FF:000135">
    <property type="entry name" value="Heat shock cognate 71 kDa protein"/>
    <property type="match status" value="1"/>
</dbReference>
<dbReference type="FunFam" id="3.90.640.10:FF:000134">
    <property type="entry name" value="Heat shock cognate 71 kDa protein"/>
    <property type="match status" value="1"/>
</dbReference>
<dbReference type="FunFam" id="3.30.420.40:FF:000026">
    <property type="entry name" value="Heat shock protein 70"/>
    <property type="match status" value="1"/>
</dbReference>
<dbReference type="Gene3D" id="1.20.1270.10">
    <property type="match status" value="1"/>
</dbReference>
<dbReference type="Gene3D" id="3.30.30.30">
    <property type="match status" value="1"/>
</dbReference>
<dbReference type="Gene3D" id="3.30.420.40">
    <property type="match status" value="2"/>
</dbReference>
<dbReference type="Gene3D" id="3.90.640.10">
    <property type="entry name" value="Actin, Chain A, domain 4"/>
    <property type="match status" value="1"/>
</dbReference>
<dbReference type="Gene3D" id="2.60.34.10">
    <property type="entry name" value="Substrate Binding Domain Of DNAk, Chain A, domain 1"/>
    <property type="match status" value="1"/>
</dbReference>
<dbReference type="InterPro" id="IPR043129">
    <property type="entry name" value="ATPase_NBD"/>
</dbReference>
<dbReference type="InterPro" id="IPR018181">
    <property type="entry name" value="Heat_shock_70_CS"/>
</dbReference>
<dbReference type="InterPro" id="IPR029048">
    <property type="entry name" value="HSP70_C_sf"/>
</dbReference>
<dbReference type="InterPro" id="IPR029047">
    <property type="entry name" value="HSP70_peptide-bd_sf"/>
</dbReference>
<dbReference type="InterPro" id="IPR013126">
    <property type="entry name" value="Hsp_70_fam"/>
</dbReference>
<dbReference type="NCBIfam" id="NF001413">
    <property type="entry name" value="PRK00290.1"/>
    <property type="match status" value="1"/>
</dbReference>
<dbReference type="PANTHER" id="PTHR19375">
    <property type="entry name" value="HEAT SHOCK PROTEIN 70KDA"/>
    <property type="match status" value="1"/>
</dbReference>
<dbReference type="Pfam" id="PF00012">
    <property type="entry name" value="HSP70"/>
    <property type="match status" value="1"/>
</dbReference>
<dbReference type="PRINTS" id="PR00301">
    <property type="entry name" value="HEATSHOCK70"/>
</dbReference>
<dbReference type="SUPFAM" id="SSF53067">
    <property type="entry name" value="Actin-like ATPase domain"/>
    <property type="match status" value="2"/>
</dbReference>
<dbReference type="SUPFAM" id="SSF100934">
    <property type="entry name" value="Heat shock protein 70kD (HSP70), C-terminal subdomain"/>
    <property type="match status" value="1"/>
</dbReference>
<dbReference type="SUPFAM" id="SSF100920">
    <property type="entry name" value="Heat shock protein 70kD (HSP70), peptide-binding domain"/>
    <property type="match status" value="1"/>
</dbReference>
<dbReference type="PROSITE" id="PS00329">
    <property type="entry name" value="HSP70_2"/>
    <property type="match status" value="1"/>
</dbReference>
<dbReference type="PROSITE" id="PS01036">
    <property type="entry name" value="HSP70_3"/>
    <property type="match status" value="1"/>
</dbReference>
<organism>
    <name type="scientific">Pichia angusta</name>
    <name type="common">Yeast</name>
    <name type="synonym">Hansenula polymorpha</name>
    <dbReference type="NCBI Taxonomy" id="870730"/>
    <lineage>
        <taxon>Eukaryota</taxon>
        <taxon>Fungi</taxon>
        <taxon>Dikarya</taxon>
        <taxon>Ascomycota</taxon>
        <taxon>Saccharomycotina</taxon>
        <taxon>Pichiomycetes</taxon>
        <taxon>Pichiales</taxon>
        <taxon>Pichiaceae</taxon>
        <taxon>Ogataea</taxon>
    </lineage>
</organism>
<gene>
    <name type="primary">HSA2</name>
</gene>
<sequence length="643" mass="70073">MSKAVGIDGGTTYSCVAHFANDRVEIIANDQGNRTTPSFVAFTDTERLSGDAAKNQAAMNPANTVFDAKRLIGRKFDDPEVQGDIKHFPFKVVDKSGKPQIQVEFKGETKVFTPEEISSMVLTKMKETAESFLGTTVKDAVITVPAYFNDSQRQATKDAGLIAGLNVMRIINEPTAAAIAYGLDKKSQGEQNVLIFDLGGGTFDVSLLSIEDGIFEVKATAGDTHLGGEDFDNRLVNHFINEFKRKNKKDICGNQRALRRLRTACERAKTTLSSSAQTSLEIDSLYEGIDFYTSITRARFEELCQDLFRSTLDPVEKVLKDAKLDKSQVNEIVLVGGSTRIPKVQKLVSDFFNGKEPNKSINPDEAVAYGAAVQAAILTGDTSSKTQDLLLLDVAPLSLGIETAGGVMTKLIPRNTTIPTKKSEIFSTYSDNQPGVLIQVYEGERARTKDNNLLGKFELSGIPPAPRGVPQIEVTFDIDANGILNVSAVEKGTGKSEKITITNDKGRLSQEEIERMVSEAEKYKEEDEKEAKRIAAKNGLESYAYSLKQTTSEKQFEEKVEASKREAFTKACDDTIAWLDENQTATAEEYDDKRKELEQAGNEVLKDLYAEGGVPGGAPGGFPGAGGAPSTEETQGPTVEEVD</sequence>
<accession>P53623</accession>
<accession>P53422</accession>
<reference key="1">
    <citation type="submission" date="1996-02" db="EMBL/GenBank/DDBJ databases">
        <authorList>
            <person name="Diesel A."/>
            <person name="Roggenkamp R.O."/>
        </authorList>
    </citation>
    <scope>NUCLEOTIDE SEQUENCE [GENOMIC DNA]</scope>
    <source>
        <strain>ATCC 34438 / CBS 4732 / DSM 70277 / JCM 3621 / NBRC 1476 / NRRL Y-5445</strain>
    </source>
</reference>
<comment type="function">
    <text evidence="1">Acts as a chaperone.</text>
</comment>
<comment type="subcellular location">
    <subcellularLocation>
        <location evidence="1">Cytoplasm</location>
    </subcellularLocation>
</comment>
<comment type="similarity">
    <text evidence="3">Belongs to the heat shock protein 70 family.</text>
</comment>
<name>HSP72_PICAN</name>
<feature type="initiator methionine" description="Removed" evidence="1">
    <location>
        <position position="1"/>
    </location>
</feature>
<feature type="chain" id="PRO_0000078377" description="Heat shock protein 70 2">
    <location>
        <begin position="2"/>
        <end position="643"/>
    </location>
</feature>
<feature type="region of interest" description="Disordered" evidence="2">
    <location>
        <begin position="609"/>
        <end position="643"/>
    </location>
</feature>
<feature type="compositionally biased region" description="Gly residues" evidence="2">
    <location>
        <begin position="613"/>
        <end position="627"/>
    </location>
</feature>
<feature type="modified residue" description="N-acetylserine" evidence="1">
    <location>
        <position position="2"/>
    </location>
</feature>
<evidence type="ECO:0000250" key="1"/>
<evidence type="ECO:0000256" key="2">
    <source>
        <dbReference type="SAM" id="MobiDB-lite"/>
    </source>
</evidence>
<evidence type="ECO:0000305" key="3"/>